<sequence>MSFPCKFVASFLLIFNVSSKGAVSKEIRNALETWGALGQDIDLDIPSFQMSDDIDDIRWEKTSDKKKIAQFRKEKETFEEKDAYKLFKNGTLKIKHLKIHDQDSYKVSIYDTKGKNVLEKTFDLKIQERVSEPKISWTCINTTLTCEVMNGTDPELNLYQDGKHVKLSQRVITHKWTTSLSAKFKCTAGNKVSKESRMETVSCPEKGLDIYLIIGICGGGSLLMVFVALLVFYITKRKKQRSRRNDEELEIRAHRVATEERGRKPHQIPASTPQNPAASQHPPPPPGHRSQAPSHRPLPPGHRVQHQPQKRPPAPSGTQVHQQKGPPLPRPRVQPKPPQGAAENSLSPSSN</sequence>
<keyword id="KW-0130">Cell adhesion</keyword>
<keyword id="KW-1003">Cell membrane</keyword>
<keyword id="KW-1015">Disulfide bond</keyword>
<keyword id="KW-0325">Glycoprotein</keyword>
<keyword id="KW-0393">Immunoglobulin domain</keyword>
<keyword id="KW-0472">Membrane</keyword>
<keyword id="KW-1185">Reference proteome</keyword>
<keyword id="KW-0677">Repeat</keyword>
<keyword id="KW-0732">Signal</keyword>
<keyword id="KW-0812">Transmembrane</keyword>
<keyword id="KW-1133">Transmembrane helix</keyword>
<proteinExistence type="evidence at transcript level"/>
<gene>
    <name type="primary">CD2</name>
</gene>
<organism>
    <name type="scientific">Macaca fascicularis</name>
    <name type="common">Crab-eating macaque</name>
    <name type="synonym">Cynomolgus monkey</name>
    <dbReference type="NCBI Taxonomy" id="9541"/>
    <lineage>
        <taxon>Eukaryota</taxon>
        <taxon>Metazoa</taxon>
        <taxon>Chordata</taxon>
        <taxon>Craniata</taxon>
        <taxon>Vertebrata</taxon>
        <taxon>Euteleostomi</taxon>
        <taxon>Mammalia</taxon>
        <taxon>Eutheria</taxon>
        <taxon>Euarchontoglires</taxon>
        <taxon>Primates</taxon>
        <taxon>Haplorrhini</taxon>
        <taxon>Catarrhini</taxon>
        <taxon>Cercopithecidae</taxon>
        <taxon>Cercopithecinae</taxon>
        <taxon>Macaca</taxon>
    </lineage>
</organism>
<protein>
    <recommendedName>
        <fullName>T-cell surface antigen CD2</fullName>
    </recommendedName>
    <cdAntigenName>CD2</cdAntigenName>
</protein>
<reference key="1">
    <citation type="journal article" date="2004" name="Mol. Immunol.">
        <title>Analysis of human and primate CD2 molecules by protein sequence and epitope mapping with anti-human CD2 antibodies.</title>
        <authorList>
            <person name="Damschroder M.M."/>
            <person name="Kozhich A.A."/>
            <person name="Woods R.M."/>
            <person name="Cheng L."/>
            <person name="Mullikin B.A."/>
            <person name="Wilson S.D."/>
            <person name="Ulbrandt N.D."/>
            <person name="Bachy C.M."/>
            <person name="Wu H."/>
            <person name="Suzich J.A."/>
            <person name="Kiener P.A."/>
            <person name="Dall'Acqua W.F."/>
            <person name="White W.I."/>
        </authorList>
    </citation>
    <scope>NUCLEOTIDE SEQUENCE [MRNA]</scope>
</reference>
<accession>Q6SZ61</accession>
<evidence type="ECO:0000250" key="1"/>
<evidence type="ECO:0000250" key="2">
    <source>
        <dbReference type="UniProtKB" id="P06729"/>
    </source>
</evidence>
<evidence type="ECO:0000250" key="3">
    <source>
        <dbReference type="UniProtKB" id="P08920"/>
    </source>
</evidence>
<evidence type="ECO:0000250" key="4">
    <source>
        <dbReference type="UniProtKB" id="P08921"/>
    </source>
</evidence>
<evidence type="ECO:0000255" key="5"/>
<evidence type="ECO:0000256" key="6">
    <source>
        <dbReference type="SAM" id="MobiDB-lite"/>
    </source>
</evidence>
<name>CD2_MACFA</name>
<dbReference type="EMBL" id="AY445036">
    <property type="protein sequence ID" value="AAR15883.1"/>
    <property type="molecule type" value="mRNA"/>
</dbReference>
<dbReference type="RefSeq" id="NP_001270706.1">
    <property type="nucleotide sequence ID" value="NM_001283777.1"/>
</dbReference>
<dbReference type="SMR" id="Q6SZ61"/>
<dbReference type="STRING" id="9541.ENSMFAP00000006516"/>
<dbReference type="GlyCosmos" id="Q6SZ61">
    <property type="glycosylation" value="3 sites, No reported glycans"/>
</dbReference>
<dbReference type="ABCD" id="Q6SZ61">
    <property type="antibodies" value="4 sequenced antibodies"/>
</dbReference>
<dbReference type="eggNOG" id="ENOG502S5UN">
    <property type="taxonomic scope" value="Eukaryota"/>
</dbReference>
<dbReference type="Proteomes" id="UP000233100">
    <property type="component" value="Unplaced"/>
</dbReference>
<dbReference type="GO" id="GO:0009986">
    <property type="term" value="C:cell surface"/>
    <property type="evidence" value="ECO:0007669"/>
    <property type="project" value="UniProtKB-ARBA"/>
</dbReference>
<dbReference type="GO" id="GO:0005886">
    <property type="term" value="C:plasma membrane"/>
    <property type="evidence" value="ECO:0000250"/>
    <property type="project" value="UniProtKB"/>
</dbReference>
<dbReference type="GO" id="GO:0005102">
    <property type="term" value="F:signaling receptor binding"/>
    <property type="evidence" value="ECO:0007669"/>
    <property type="project" value="TreeGrafter"/>
</dbReference>
<dbReference type="GO" id="GO:0098609">
    <property type="term" value="P:cell-cell adhesion"/>
    <property type="evidence" value="ECO:0007669"/>
    <property type="project" value="TreeGrafter"/>
</dbReference>
<dbReference type="GO" id="GO:0030101">
    <property type="term" value="P:natural killer cell activation"/>
    <property type="evidence" value="ECO:0000250"/>
    <property type="project" value="UniProtKB"/>
</dbReference>
<dbReference type="GO" id="GO:0042267">
    <property type="term" value="P:natural killer cell mediated cytotoxicity"/>
    <property type="evidence" value="ECO:0000250"/>
    <property type="project" value="UniProtKB"/>
</dbReference>
<dbReference type="GO" id="GO:0032729">
    <property type="term" value="P:positive regulation of type II interferon production"/>
    <property type="evidence" value="ECO:0007669"/>
    <property type="project" value="TreeGrafter"/>
</dbReference>
<dbReference type="CDD" id="cd12087">
    <property type="entry name" value="TM_EGFR-like"/>
    <property type="match status" value="1"/>
</dbReference>
<dbReference type="FunFam" id="2.60.40.10:FF:001736">
    <property type="entry name" value="T-cell surface antigen CD2"/>
    <property type="match status" value="1"/>
</dbReference>
<dbReference type="Gene3D" id="2.60.40.10">
    <property type="entry name" value="Immunoglobulins"/>
    <property type="match status" value="2"/>
</dbReference>
<dbReference type="InterPro" id="IPR015632">
    <property type="entry name" value="CD2"/>
</dbReference>
<dbReference type="InterPro" id="IPR015631">
    <property type="entry name" value="CD2/SLAM_rcpt"/>
</dbReference>
<dbReference type="InterPro" id="IPR036179">
    <property type="entry name" value="Ig-like_dom_sf"/>
</dbReference>
<dbReference type="InterPro" id="IPR013783">
    <property type="entry name" value="Ig-like_fold"/>
</dbReference>
<dbReference type="InterPro" id="IPR008424">
    <property type="entry name" value="Ig_C2-set"/>
</dbReference>
<dbReference type="InterPro" id="IPR013106">
    <property type="entry name" value="Ig_V-set"/>
</dbReference>
<dbReference type="PANTHER" id="PTHR12080">
    <property type="entry name" value="SIGNALING LYMPHOCYTIC ACTIVATION MOLECULE"/>
    <property type="match status" value="1"/>
</dbReference>
<dbReference type="PANTHER" id="PTHR12080:SF54">
    <property type="entry name" value="T-CELL SURFACE ANTIGEN CD2"/>
    <property type="match status" value="1"/>
</dbReference>
<dbReference type="Pfam" id="PF05790">
    <property type="entry name" value="C2-set"/>
    <property type="match status" value="1"/>
</dbReference>
<dbReference type="Pfam" id="PF07686">
    <property type="entry name" value="V-set"/>
    <property type="match status" value="1"/>
</dbReference>
<dbReference type="PRINTS" id="PR01870">
    <property type="entry name" value="CD2ANTIGEN"/>
</dbReference>
<dbReference type="SUPFAM" id="SSF48726">
    <property type="entry name" value="Immunoglobulin"/>
    <property type="match status" value="2"/>
</dbReference>
<feature type="signal peptide" evidence="1">
    <location>
        <begin position="1"/>
        <end position="24"/>
    </location>
</feature>
<feature type="chain" id="PRO_0000014601" description="T-cell surface antigen CD2">
    <location>
        <begin position="25"/>
        <end position="351"/>
    </location>
</feature>
<feature type="topological domain" description="Extracellular" evidence="5">
    <location>
        <begin position="25"/>
        <end position="209"/>
    </location>
</feature>
<feature type="transmembrane region" description="Helical" evidence="5">
    <location>
        <begin position="210"/>
        <end position="235"/>
    </location>
</feature>
<feature type="topological domain" description="Cytoplasmic" evidence="5">
    <location>
        <begin position="236"/>
        <end position="351"/>
    </location>
</feature>
<feature type="domain" description="Ig-like V-type">
    <location>
        <begin position="25"/>
        <end position="128"/>
    </location>
</feature>
<feature type="domain" description="Ig-like C2-type">
    <location>
        <begin position="129"/>
        <end position="209"/>
    </location>
</feature>
<feature type="region of interest" description="CD58 binding region 1" evidence="2">
    <location>
        <begin position="61"/>
        <end position="75"/>
    </location>
</feature>
<feature type="region of interest" description="CD58 binding region 2" evidence="2">
    <location>
        <begin position="106"/>
        <end position="120"/>
    </location>
</feature>
<feature type="region of interest" description="Disordered" evidence="6">
    <location>
        <begin position="241"/>
        <end position="351"/>
    </location>
</feature>
<feature type="compositionally biased region" description="Basic and acidic residues" evidence="6">
    <location>
        <begin position="243"/>
        <end position="262"/>
    </location>
</feature>
<feature type="compositionally biased region" description="Pro residues" evidence="6">
    <location>
        <begin position="326"/>
        <end position="338"/>
    </location>
</feature>
<feature type="compositionally biased region" description="Polar residues" evidence="6">
    <location>
        <begin position="342"/>
        <end position="351"/>
    </location>
</feature>
<feature type="glycosylation site" description="N-linked (GlcNAc...) asparagine" evidence="5">
    <location>
        <position position="89"/>
    </location>
</feature>
<feature type="glycosylation site" description="N-linked (GlcNAc...) asparagine" evidence="5">
    <location>
        <position position="141"/>
    </location>
</feature>
<feature type="glycosylation site" description="N-linked (GlcNAc...) asparagine" evidence="5">
    <location>
        <position position="150"/>
    </location>
</feature>
<feature type="disulfide bond" evidence="4">
    <location>
        <begin position="139"/>
        <end position="203"/>
    </location>
</feature>
<feature type="disulfide bond" evidence="4">
    <location>
        <begin position="146"/>
        <end position="186"/>
    </location>
</feature>
<comment type="function">
    <text evidence="1">CD2 interacts with lymphocyte function-associated antigen CD58 (LFA-3) and CD48/BCM1 to mediate adhesion between T-cells and other cell types. CD2 is implicated in the triggering of T-cells, the cytoplasmic domain is implicated in the signaling function (By similarity).</text>
</comment>
<comment type="subunit">
    <text evidence="2 3 4">Interacts with CD48 (By similarity). Interacts with CD58 (LFA-3) (By similarity). Interacts with CD2AP (By similarity). Interacts with PSTPIP1 (By similarity). Interacts with FCGR3A; this interaction modulates NK cell activation and cytotoxicity.</text>
</comment>
<comment type="subcellular location">
    <subcellularLocation>
        <location evidence="2">Cell membrane</location>
        <topology evidence="2">Single-pass type I membrane protein</topology>
    </subcellularLocation>
</comment>